<sequence>MRQRMSRMPSSFYIHTFGCQMNQADSEIVTALLRAEGFVPSADETNADIVLLNSCAVRENAEERLGNILMHLKGRKRRCKELVIGVLGCVPQFERERVFSDYPFVDFIVGPDNYRELAGLVAGLREAVARPALLDYDQTETYAGIEPVRAGSISAFLPVMRGCNNHCAFCVVPVTRGRERSVGFERVVAEVVALEKAGFREVTLLGQNVNSWRDAEKGLDFAGLLEGVSLAVPSMRIRFTTSHPKDISEALVKVIAARPNLCNHIHLPVQSGSSRMLDLMKRGHTREEYLDRIAMIRSYIPEVAITTDLIAGFCTETEKDHRETLSLMEAVGYDTAFMFHYSVRPGTWAARNLPDDVPDTVKKARLQEIIELQNAISREIFQREIGKTVEVLAEAESKRSESMLMGRTPENRVVVFSRGRFNPSDTLLVKITGATSATLSGEAV</sequence>
<gene>
    <name evidence="1" type="primary">miaB</name>
    <name type="ordered locus">CT1993</name>
</gene>
<proteinExistence type="inferred from homology"/>
<protein>
    <recommendedName>
        <fullName evidence="1">tRNA-2-methylthio-N(6)-dimethylallyladenosine synthase</fullName>
        <ecNumber evidence="1">2.8.4.3</ecNumber>
    </recommendedName>
    <alternativeName>
        <fullName evidence="1">(Dimethylallyl)adenosine tRNA methylthiotransferase MiaB</fullName>
    </alternativeName>
    <alternativeName>
        <fullName evidence="1">tRNA-i(6)A37 methylthiotransferase</fullName>
    </alternativeName>
</protein>
<accession>Q8KB05</accession>
<keyword id="KW-0004">4Fe-4S</keyword>
<keyword id="KW-0963">Cytoplasm</keyword>
<keyword id="KW-0408">Iron</keyword>
<keyword id="KW-0411">Iron-sulfur</keyword>
<keyword id="KW-0479">Metal-binding</keyword>
<keyword id="KW-1185">Reference proteome</keyword>
<keyword id="KW-0949">S-adenosyl-L-methionine</keyword>
<keyword id="KW-0808">Transferase</keyword>
<keyword id="KW-0819">tRNA processing</keyword>
<evidence type="ECO:0000255" key="1">
    <source>
        <dbReference type="HAMAP-Rule" id="MF_01864"/>
    </source>
</evidence>
<evidence type="ECO:0000255" key="2">
    <source>
        <dbReference type="PROSITE-ProRule" id="PRU01266"/>
    </source>
</evidence>
<organism>
    <name type="scientific">Chlorobaculum tepidum (strain ATCC 49652 / DSM 12025 / NBRC 103806 / TLS)</name>
    <name type="common">Chlorobium tepidum</name>
    <dbReference type="NCBI Taxonomy" id="194439"/>
    <lineage>
        <taxon>Bacteria</taxon>
        <taxon>Pseudomonadati</taxon>
        <taxon>Chlorobiota</taxon>
        <taxon>Chlorobiia</taxon>
        <taxon>Chlorobiales</taxon>
        <taxon>Chlorobiaceae</taxon>
        <taxon>Chlorobaculum</taxon>
    </lineage>
</organism>
<reference key="1">
    <citation type="journal article" date="2002" name="Proc. Natl. Acad. Sci. U.S.A.">
        <title>The complete genome sequence of Chlorobium tepidum TLS, a photosynthetic, anaerobic, green-sulfur bacterium.</title>
        <authorList>
            <person name="Eisen J.A."/>
            <person name="Nelson K.E."/>
            <person name="Paulsen I.T."/>
            <person name="Heidelberg J.F."/>
            <person name="Wu M."/>
            <person name="Dodson R.J."/>
            <person name="DeBoy R.T."/>
            <person name="Gwinn M.L."/>
            <person name="Nelson W.C."/>
            <person name="Haft D.H."/>
            <person name="Hickey E.K."/>
            <person name="Peterson J.D."/>
            <person name="Durkin A.S."/>
            <person name="Kolonay J.F."/>
            <person name="Yang F."/>
            <person name="Holt I.E."/>
            <person name="Umayam L.A."/>
            <person name="Mason T.M."/>
            <person name="Brenner M."/>
            <person name="Shea T.P."/>
            <person name="Parksey D.S."/>
            <person name="Nierman W.C."/>
            <person name="Feldblyum T.V."/>
            <person name="Hansen C.L."/>
            <person name="Craven M.B."/>
            <person name="Radune D."/>
            <person name="Vamathevan J.J."/>
            <person name="Khouri H.M."/>
            <person name="White O."/>
            <person name="Gruber T.M."/>
            <person name="Ketchum K.A."/>
            <person name="Venter J.C."/>
            <person name="Tettelin H."/>
            <person name="Bryant D.A."/>
            <person name="Fraser C.M."/>
        </authorList>
    </citation>
    <scope>NUCLEOTIDE SEQUENCE [LARGE SCALE GENOMIC DNA]</scope>
    <source>
        <strain>ATCC 49652 / DSM 12025 / NBRC 103806 / TLS</strain>
    </source>
</reference>
<name>MIAB_CHLTE</name>
<dbReference type="EC" id="2.8.4.3" evidence="1"/>
<dbReference type="EMBL" id="AE006470">
    <property type="protein sequence ID" value="AAM73211.1"/>
    <property type="molecule type" value="Genomic_DNA"/>
</dbReference>
<dbReference type="RefSeq" id="NP_662869.1">
    <property type="nucleotide sequence ID" value="NC_002932.3"/>
</dbReference>
<dbReference type="SMR" id="Q8KB05"/>
<dbReference type="STRING" id="194439.CT1993"/>
<dbReference type="EnsemblBacteria" id="AAM73211">
    <property type="protein sequence ID" value="AAM73211"/>
    <property type="gene ID" value="CT1993"/>
</dbReference>
<dbReference type="KEGG" id="cte:CT1993"/>
<dbReference type="PATRIC" id="fig|194439.7.peg.1805"/>
<dbReference type="eggNOG" id="COG0621">
    <property type="taxonomic scope" value="Bacteria"/>
</dbReference>
<dbReference type="HOGENOM" id="CLU_018697_2_0_10"/>
<dbReference type="OrthoDB" id="9805215at2"/>
<dbReference type="Proteomes" id="UP000001007">
    <property type="component" value="Chromosome"/>
</dbReference>
<dbReference type="GO" id="GO:0005829">
    <property type="term" value="C:cytosol"/>
    <property type="evidence" value="ECO:0007669"/>
    <property type="project" value="TreeGrafter"/>
</dbReference>
<dbReference type="GO" id="GO:0051539">
    <property type="term" value="F:4 iron, 4 sulfur cluster binding"/>
    <property type="evidence" value="ECO:0007669"/>
    <property type="project" value="UniProtKB-UniRule"/>
</dbReference>
<dbReference type="GO" id="GO:0046872">
    <property type="term" value="F:metal ion binding"/>
    <property type="evidence" value="ECO:0007669"/>
    <property type="project" value="UniProtKB-KW"/>
</dbReference>
<dbReference type="GO" id="GO:0035597">
    <property type="term" value="F:N6-isopentenyladenosine methylthiotransferase activity"/>
    <property type="evidence" value="ECO:0007669"/>
    <property type="project" value="TreeGrafter"/>
</dbReference>
<dbReference type="CDD" id="cd01335">
    <property type="entry name" value="Radical_SAM"/>
    <property type="match status" value="1"/>
</dbReference>
<dbReference type="FunFam" id="3.40.50.12160:FF:000003">
    <property type="entry name" value="CDK5 regulatory subunit-associated protein 1"/>
    <property type="match status" value="1"/>
</dbReference>
<dbReference type="FunFam" id="3.80.30.20:FF:000001">
    <property type="entry name" value="tRNA-2-methylthio-N(6)-dimethylallyladenosine synthase 2"/>
    <property type="match status" value="1"/>
</dbReference>
<dbReference type="Gene3D" id="3.40.50.12160">
    <property type="entry name" value="Methylthiotransferase, N-terminal domain"/>
    <property type="match status" value="1"/>
</dbReference>
<dbReference type="Gene3D" id="3.80.30.20">
    <property type="entry name" value="tm_1862 like domain"/>
    <property type="match status" value="1"/>
</dbReference>
<dbReference type="HAMAP" id="MF_01864">
    <property type="entry name" value="tRNA_metthiotr_MiaB"/>
    <property type="match status" value="1"/>
</dbReference>
<dbReference type="InterPro" id="IPR006638">
    <property type="entry name" value="Elp3/MiaA/NifB-like_rSAM"/>
</dbReference>
<dbReference type="InterPro" id="IPR005839">
    <property type="entry name" value="Methylthiotransferase"/>
</dbReference>
<dbReference type="InterPro" id="IPR020612">
    <property type="entry name" value="Methylthiotransferase_CS"/>
</dbReference>
<dbReference type="InterPro" id="IPR013848">
    <property type="entry name" value="Methylthiotransferase_N"/>
</dbReference>
<dbReference type="InterPro" id="IPR038135">
    <property type="entry name" value="Methylthiotransferase_N_sf"/>
</dbReference>
<dbReference type="InterPro" id="IPR006463">
    <property type="entry name" value="MiaB_methiolase"/>
</dbReference>
<dbReference type="InterPro" id="IPR007197">
    <property type="entry name" value="rSAM"/>
</dbReference>
<dbReference type="InterPro" id="IPR023404">
    <property type="entry name" value="rSAM_horseshoe"/>
</dbReference>
<dbReference type="InterPro" id="IPR002792">
    <property type="entry name" value="TRAM_dom"/>
</dbReference>
<dbReference type="NCBIfam" id="TIGR01574">
    <property type="entry name" value="miaB-methiolase"/>
    <property type="match status" value="1"/>
</dbReference>
<dbReference type="NCBIfam" id="TIGR00089">
    <property type="entry name" value="MiaB/RimO family radical SAM methylthiotransferase"/>
    <property type="match status" value="1"/>
</dbReference>
<dbReference type="PANTHER" id="PTHR43020">
    <property type="entry name" value="CDK5 REGULATORY SUBUNIT-ASSOCIATED PROTEIN 1"/>
    <property type="match status" value="1"/>
</dbReference>
<dbReference type="PANTHER" id="PTHR43020:SF2">
    <property type="entry name" value="MITOCHONDRIAL TRNA METHYLTHIOTRANSFERASE CDK5RAP1"/>
    <property type="match status" value="1"/>
</dbReference>
<dbReference type="Pfam" id="PF04055">
    <property type="entry name" value="Radical_SAM"/>
    <property type="match status" value="1"/>
</dbReference>
<dbReference type="Pfam" id="PF01938">
    <property type="entry name" value="TRAM"/>
    <property type="match status" value="1"/>
</dbReference>
<dbReference type="Pfam" id="PF00919">
    <property type="entry name" value="UPF0004"/>
    <property type="match status" value="1"/>
</dbReference>
<dbReference type="SFLD" id="SFLDF00273">
    <property type="entry name" value="(dimethylallyl)adenosine_tRNA"/>
    <property type="match status" value="1"/>
</dbReference>
<dbReference type="SFLD" id="SFLDG01082">
    <property type="entry name" value="B12-binding_domain_containing"/>
    <property type="match status" value="1"/>
</dbReference>
<dbReference type="SFLD" id="SFLDF00413">
    <property type="entry name" value="CDK5RAP1"/>
    <property type="match status" value="1"/>
</dbReference>
<dbReference type="SFLD" id="SFLDS00029">
    <property type="entry name" value="Radical_SAM"/>
    <property type="match status" value="1"/>
</dbReference>
<dbReference type="SMART" id="SM00729">
    <property type="entry name" value="Elp3"/>
    <property type="match status" value="1"/>
</dbReference>
<dbReference type="SUPFAM" id="SSF102114">
    <property type="entry name" value="Radical SAM enzymes"/>
    <property type="match status" value="1"/>
</dbReference>
<dbReference type="PROSITE" id="PS51449">
    <property type="entry name" value="MTTASE_N"/>
    <property type="match status" value="1"/>
</dbReference>
<dbReference type="PROSITE" id="PS01278">
    <property type="entry name" value="MTTASE_RADICAL"/>
    <property type="match status" value="1"/>
</dbReference>
<dbReference type="PROSITE" id="PS51918">
    <property type="entry name" value="RADICAL_SAM"/>
    <property type="match status" value="1"/>
</dbReference>
<dbReference type="PROSITE" id="PS50926">
    <property type="entry name" value="TRAM"/>
    <property type="match status" value="1"/>
</dbReference>
<comment type="function">
    <text evidence="1">Catalyzes the methylthiolation of N6-(dimethylallyl)adenosine (i(6)A), leading to the formation of 2-methylthio-N6-(dimethylallyl)adenosine (ms(2)i(6)A) at position 37 in tRNAs that read codons beginning with uridine.</text>
</comment>
<comment type="catalytic activity">
    <reaction evidence="1">
        <text>N(6)-dimethylallyladenosine(37) in tRNA + (sulfur carrier)-SH + AH2 + 2 S-adenosyl-L-methionine = 2-methylsulfanyl-N(6)-dimethylallyladenosine(37) in tRNA + (sulfur carrier)-H + 5'-deoxyadenosine + L-methionine + A + S-adenosyl-L-homocysteine + 2 H(+)</text>
        <dbReference type="Rhea" id="RHEA:37067"/>
        <dbReference type="Rhea" id="RHEA-COMP:10375"/>
        <dbReference type="Rhea" id="RHEA-COMP:10376"/>
        <dbReference type="Rhea" id="RHEA-COMP:14737"/>
        <dbReference type="Rhea" id="RHEA-COMP:14739"/>
        <dbReference type="ChEBI" id="CHEBI:13193"/>
        <dbReference type="ChEBI" id="CHEBI:15378"/>
        <dbReference type="ChEBI" id="CHEBI:17319"/>
        <dbReference type="ChEBI" id="CHEBI:17499"/>
        <dbReference type="ChEBI" id="CHEBI:29917"/>
        <dbReference type="ChEBI" id="CHEBI:57844"/>
        <dbReference type="ChEBI" id="CHEBI:57856"/>
        <dbReference type="ChEBI" id="CHEBI:59789"/>
        <dbReference type="ChEBI" id="CHEBI:64428"/>
        <dbReference type="ChEBI" id="CHEBI:74415"/>
        <dbReference type="ChEBI" id="CHEBI:74417"/>
        <dbReference type="EC" id="2.8.4.3"/>
    </reaction>
</comment>
<comment type="cofactor">
    <cofactor evidence="1">
        <name>[4Fe-4S] cluster</name>
        <dbReference type="ChEBI" id="CHEBI:49883"/>
    </cofactor>
    <text evidence="1">Binds 2 [4Fe-4S] clusters. One cluster is coordinated with 3 cysteines and an exchangeable S-adenosyl-L-methionine.</text>
</comment>
<comment type="subunit">
    <text evidence="1">Monomer.</text>
</comment>
<comment type="subcellular location">
    <subcellularLocation>
        <location evidence="1">Cytoplasm</location>
    </subcellularLocation>
</comment>
<comment type="similarity">
    <text evidence="1">Belongs to the methylthiotransferase family. MiaB subfamily.</text>
</comment>
<feature type="chain" id="PRO_0000374211" description="tRNA-2-methylthio-N(6)-dimethylallyladenosine synthase">
    <location>
        <begin position="1"/>
        <end position="444"/>
    </location>
</feature>
<feature type="domain" description="MTTase N-terminal" evidence="1">
    <location>
        <begin position="10"/>
        <end position="126"/>
    </location>
</feature>
<feature type="domain" description="Radical SAM core" evidence="2">
    <location>
        <begin position="149"/>
        <end position="379"/>
    </location>
</feature>
<feature type="domain" description="TRAM" evidence="1">
    <location>
        <begin position="382"/>
        <end position="444"/>
    </location>
</feature>
<feature type="binding site" evidence="1">
    <location>
        <position position="19"/>
    </location>
    <ligand>
        <name>[4Fe-4S] cluster</name>
        <dbReference type="ChEBI" id="CHEBI:49883"/>
        <label>1</label>
    </ligand>
</feature>
<feature type="binding site" evidence="1">
    <location>
        <position position="55"/>
    </location>
    <ligand>
        <name>[4Fe-4S] cluster</name>
        <dbReference type="ChEBI" id="CHEBI:49883"/>
        <label>1</label>
    </ligand>
</feature>
<feature type="binding site" evidence="1">
    <location>
        <position position="89"/>
    </location>
    <ligand>
        <name>[4Fe-4S] cluster</name>
        <dbReference type="ChEBI" id="CHEBI:49883"/>
        <label>1</label>
    </ligand>
</feature>
<feature type="binding site" evidence="1">
    <location>
        <position position="163"/>
    </location>
    <ligand>
        <name>[4Fe-4S] cluster</name>
        <dbReference type="ChEBI" id="CHEBI:49883"/>
        <label>2</label>
        <note>4Fe-4S-S-AdoMet</note>
    </ligand>
</feature>
<feature type="binding site" evidence="1">
    <location>
        <position position="167"/>
    </location>
    <ligand>
        <name>[4Fe-4S] cluster</name>
        <dbReference type="ChEBI" id="CHEBI:49883"/>
        <label>2</label>
        <note>4Fe-4S-S-AdoMet</note>
    </ligand>
</feature>
<feature type="binding site" evidence="1">
    <location>
        <position position="170"/>
    </location>
    <ligand>
        <name>[4Fe-4S] cluster</name>
        <dbReference type="ChEBI" id="CHEBI:49883"/>
        <label>2</label>
        <note>4Fe-4S-S-AdoMet</note>
    </ligand>
</feature>